<reference key="1">
    <citation type="journal article" date="1995" name="Plant Mol. Biol.">
        <title>Molecular cloning and characterization of a pea chitinase gene expressed in response to wounding, fungal infection and the elicitor chitosan.</title>
        <authorList>
            <person name="Chang M.M."/>
            <person name="Horovitz D."/>
            <person name="Culley D."/>
            <person name="Hadwiger L.A."/>
        </authorList>
    </citation>
    <scope>NUCLEOTIDE SEQUENCE [GENOMIC DNA]</scope>
    <source>
        <strain>cv. Alcan</strain>
    </source>
</reference>
<reference key="2">
    <citation type="journal article" date="1991" name="Planta">
        <title>Induction, purification and characterization of chitinase isolated from pea leaves inoculated with Ascochyta pisi.</title>
        <authorList>
            <person name="Vad K."/>
            <person name="Mikkelsen J.D."/>
            <person name="Collinge D.B."/>
        </authorList>
    </citation>
    <scope>PROTEIN SEQUENCE OF 21-36</scope>
    <source>
        <strain>cv. Birte</strain>
        <tissue>Leaf</tissue>
    </source>
</reference>
<gene>
    <name type="primary">CHI2</name>
</gene>
<protein>
    <recommendedName>
        <fullName>Endochitinase A2</fullName>
        <ecNumber>3.2.1.14</ecNumber>
    </recommendedName>
</protein>
<keyword id="KW-0119">Carbohydrate metabolism</keyword>
<keyword id="KW-0146">Chitin degradation</keyword>
<keyword id="KW-0147">Chitin-binding</keyword>
<keyword id="KW-0903">Direct protein sequencing</keyword>
<keyword id="KW-1015">Disulfide bond</keyword>
<keyword id="KW-0326">Glycosidase</keyword>
<keyword id="KW-0378">Hydrolase</keyword>
<keyword id="KW-0611">Plant defense</keyword>
<keyword id="KW-0624">Polysaccharide degradation</keyword>
<keyword id="KW-0732">Signal</keyword>
<evidence type="ECO:0000250" key="1"/>
<evidence type="ECO:0000250" key="2">
    <source>
        <dbReference type="UniProtKB" id="P29022"/>
    </source>
</evidence>
<evidence type="ECO:0000255" key="3">
    <source>
        <dbReference type="PROSITE-ProRule" id="PRU00261"/>
    </source>
</evidence>
<evidence type="ECO:0000269" key="4">
    <source ref="2"/>
</evidence>
<evidence type="ECO:0000305" key="5"/>
<name>CHI2_PEA</name>
<proteinExistence type="evidence at protein level"/>
<organism>
    <name type="scientific">Pisum sativum</name>
    <name type="common">Garden pea</name>
    <name type="synonym">Lathyrus oleraceus</name>
    <dbReference type="NCBI Taxonomy" id="3888"/>
    <lineage>
        <taxon>Eukaryota</taxon>
        <taxon>Viridiplantae</taxon>
        <taxon>Streptophyta</taxon>
        <taxon>Embryophyta</taxon>
        <taxon>Tracheophyta</taxon>
        <taxon>Spermatophyta</taxon>
        <taxon>Magnoliopsida</taxon>
        <taxon>eudicotyledons</taxon>
        <taxon>Gunneridae</taxon>
        <taxon>Pentapetalae</taxon>
        <taxon>rosids</taxon>
        <taxon>fabids</taxon>
        <taxon>Fabales</taxon>
        <taxon>Fabaceae</taxon>
        <taxon>Papilionoideae</taxon>
        <taxon>50 kb inversion clade</taxon>
        <taxon>NPAAA clade</taxon>
        <taxon>Hologalegina</taxon>
        <taxon>IRL clade</taxon>
        <taxon>Fabeae</taxon>
        <taxon>Pisum</taxon>
    </lineage>
</organism>
<accession>P21226</accession>
<feature type="signal peptide" evidence="4">
    <location>
        <begin position="1"/>
        <end position="20"/>
    </location>
</feature>
<feature type="chain" id="PRO_0000005308" description="Endochitinase A2">
    <location>
        <begin position="21"/>
        <end position="309"/>
    </location>
</feature>
<feature type="propeptide" id="PRO_0000005309" description="Removed in mature form" evidence="1">
    <location>
        <begin position="310"/>
        <end position="324"/>
    </location>
</feature>
<feature type="domain" description="Chitin-binding type-1" evidence="3">
    <location>
        <begin position="21"/>
        <end position="61"/>
    </location>
</feature>
<feature type="active site" description="Proton donor" evidence="2">
    <location>
        <position position="133"/>
    </location>
</feature>
<feature type="disulfide bond" evidence="3">
    <location>
        <begin position="23"/>
        <end position="38"/>
    </location>
</feature>
<feature type="disulfide bond" evidence="3">
    <location>
        <begin position="32"/>
        <end position="44"/>
    </location>
</feature>
<feature type="disulfide bond" evidence="3">
    <location>
        <begin position="37"/>
        <end position="51"/>
    </location>
</feature>
<feature type="disulfide bond" evidence="3">
    <location>
        <begin position="55"/>
        <end position="59"/>
    </location>
</feature>
<feature type="disulfide bond" evidence="3">
    <location>
        <begin position="151"/>
        <end position="170"/>
    </location>
</feature>
<feature type="disulfide bond" evidence="3">
    <location>
        <begin position="269"/>
        <end position="301"/>
    </location>
</feature>
<dbReference type="EC" id="3.2.1.14"/>
<dbReference type="EMBL" id="L37876">
    <property type="protein sequence ID" value="AAA75196.1"/>
    <property type="molecule type" value="Genomic_DNA"/>
</dbReference>
<dbReference type="PIR" id="S56694">
    <property type="entry name" value="S56694"/>
</dbReference>
<dbReference type="SMR" id="P21226"/>
<dbReference type="CAZy" id="CBM18">
    <property type="family name" value="Carbohydrate-Binding Module Family 18"/>
</dbReference>
<dbReference type="CAZy" id="GH19">
    <property type="family name" value="Glycoside Hydrolase Family 19"/>
</dbReference>
<dbReference type="GO" id="GO:0008061">
    <property type="term" value="F:chitin binding"/>
    <property type="evidence" value="ECO:0007669"/>
    <property type="project" value="UniProtKB-KW"/>
</dbReference>
<dbReference type="GO" id="GO:0008843">
    <property type="term" value="F:endochitinase activity"/>
    <property type="evidence" value="ECO:0007669"/>
    <property type="project" value="UniProtKB-EC"/>
</dbReference>
<dbReference type="GO" id="GO:0016998">
    <property type="term" value="P:cell wall macromolecule catabolic process"/>
    <property type="evidence" value="ECO:0007669"/>
    <property type="project" value="InterPro"/>
</dbReference>
<dbReference type="GO" id="GO:0006032">
    <property type="term" value="P:chitin catabolic process"/>
    <property type="evidence" value="ECO:0007669"/>
    <property type="project" value="UniProtKB-KW"/>
</dbReference>
<dbReference type="GO" id="GO:0050832">
    <property type="term" value="P:defense response to fungus"/>
    <property type="evidence" value="ECO:0007669"/>
    <property type="project" value="UniProtKB-ARBA"/>
</dbReference>
<dbReference type="GO" id="GO:0000272">
    <property type="term" value="P:polysaccharide catabolic process"/>
    <property type="evidence" value="ECO:0007669"/>
    <property type="project" value="UniProtKB-KW"/>
</dbReference>
<dbReference type="CDD" id="cd00325">
    <property type="entry name" value="chitinase_GH19"/>
    <property type="match status" value="1"/>
</dbReference>
<dbReference type="CDD" id="cd06921">
    <property type="entry name" value="ChtBD1_GH19_hevein"/>
    <property type="match status" value="1"/>
</dbReference>
<dbReference type="FunFam" id="3.30.60.10:FF:000001">
    <property type="entry name" value="Basic endochitinase"/>
    <property type="match status" value="1"/>
</dbReference>
<dbReference type="FunFam" id="3.30.20.10:FF:000001">
    <property type="entry name" value="Endochitinase (Chitinase)"/>
    <property type="match status" value="1"/>
</dbReference>
<dbReference type="Gene3D" id="1.10.530.10">
    <property type="match status" value="1"/>
</dbReference>
<dbReference type="Gene3D" id="3.30.20.10">
    <property type="entry name" value="Endochitinase, domain 2"/>
    <property type="match status" value="1"/>
</dbReference>
<dbReference type="Gene3D" id="3.30.60.10">
    <property type="entry name" value="Endochitinase-like"/>
    <property type="match status" value="1"/>
</dbReference>
<dbReference type="InterPro" id="IPR001002">
    <property type="entry name" value="Chitin-bd_1"/>
</dbReference>
<dbReference type="InterPro" id="IPR018371">
    <property type="entry name" value="Chitin-binding_1_CS"/>
</dbReference>
<dbReference type="InterPro" id="IPR036861">
    <property type="entry name" value="Endochitinase-like_sf"/>
</dbReference>
<dbReference type="InterPro" id="IPR016283">
    <property type="entry name" value="Glyco_hydro_19"/>
</dbReference>
<dbReference type="InterPro" id="IPR000726">
    <property type="entry name" value="Glyco_hydro_19_cat"/>
</dbReference>
<dbReference type="InterPro" id="IPR023346">
    <property type="entry name" value="Lysozyme-like_dom_sf"/>
</dbReference>
<dbReference type="PANTHER" id="PTHR22595:SF79">
    <property type="entry name" value="CHITINASE 12"/>
    <property type="match status" value="1"/>
</dbReference>
<dbReference type="PANTHER" id="PTHR22595">
    <property type="entry name" value="CHITINASE-RELATED"/>
    <property type="match status" value="1"/>
</dbReference>
<dbReference type="Pfam" id="PF00187">
    <property type="entry name" value="Chitin_bind_1"/>
    <property type="match status" value="1"/>
</dbReference>
<dbReference type="Pfam" id="PF00182">
    <property type="entry name" value="Glyco_hydro_19"/>
    <property type="match status" value="1"/>
</dbReference>
<dbReference type="PIRSF" id="PIRSF001060">
    <property type="entry name" value="Endochitinase"/>
    <property type="match status" value="1"/>
</dbReference>
<dbReference type="PRINTS" id="PR00451">
    <property type="entry name" value="CHITINBINDNG"/>
</dbReference>
<dbReference type="SMART" id="SM00270">
    <property type="entry name" value="ChtBD1"/>
    <property type="match status" value="1"/>
</dbReference>
<dbReference type="SUPFAM" id="SSF53955">
    <property type="entry name" value="Lysozyme-like"/>
    <property type="match status" value="1"/>
</dbReference>
<dbReference type="SUPFAM" id="SSF57016">
    <property type="entry name" value="Plant lectins/antimicrobial peptides"/>
    <property type="match status" value="1"/>
</dbReference>
<dbReference type="PROSITE" id="PS00026">
    <property type="entry name" value="CHIT_BIND_I_1"/>
    <property type="match status" value="1"/>
</dbReference>
<dbReference type="PROSITE" id="PS50941">
    <property type="entry name" value="CHIT_BIND_I_2"/>
    <property type="match status" value="1"/>
</dbReference>
<dbReference type="PROSITE" id="PS00773">
    <property type="entry name" value="CHITINASE_19_1"/>
    <property type="match status" value="1"/>
</dbReference>
<dbReference type="PROSITE" id="PS00774">
    <property type="entry name" value="CHITINASE_19_2"/>
    <property type="match status" value="1"/>
</dbReference>
<sequence length="324" mass="34678">MSKLRIPILLVLFIVSCCSAEQCGTQAGGALCPGGLCCSKFGWCGSTSEYCGDGCQSQCSGSSGGGTLSSLISGDTFNNMLKHRNDNACQGKPFYTYDAFLSAAKAFPNFANKGDTATKKREIAAFLGQTSHETTGGWPTAPDGPYAWGYCFLREQNPSTYCQASSEFPCASGKQYYGRGPIQISWNYNYGQCGRAIGVDLLNNPDLVATDPVISFKTALWFWMTPQSPKPSCHDVITGGWTPSSADRAAGRLPGYGTVTNIINGGLECGRGQDSRVQDRIGFYKRYCDIFGIGYGDNLDCYSQRPFGSSLPLSSILLDTVAAA</sequence>
<comment type="function">
    <text>Defense against chitin-containing fungal pathogens.</text>
</comment>
<comment type="catalytic activity">
    <reaction>
        <text>Random endo-hydrolysis of N-acetyl-beta-D-glucosaminide (1-&gt;4)-beta-linkages in chitin and chitodextrins.</text>
        <dbReference type="EC" id="3.2.1.14"/>
    </reaction>
</comment>
<comment type="induction">
    <text>By infection with the fungal pathogen Ascochyta pisi.</text>
</comment>
<comment type="similarity">
    <text evidence="5">Belongs to the glycosyl hydrolase 19 family. Chitinase class I subfamily.</text>
</comment>